<gene>
    <name evidence="3" type="primary">bcl-ts</name>
</gene>
<sequence>MGTVPANPFKIIQLAFKETVPKAHAELQKWHQEALKIEDVEIREQAAWTVNDKTFHCEGGSIFALLAGENKDNHIQFLVAYQTICDYLDTLCDKNDAHDPNDFRSIHQALLDCLTPDKPYGDYYQYRDRFEDNGYLRKLVDACREATASFPGFADMQTHMQEVSQFYIDFQVYKHVEEEKREPLLKDFYERNKHFAPTMRWYEFACGTASTLALYCMAAYAAAPVQTAQGQQIKEAYFTWVQGVHILLDYFIDQEEDRQENEMNFVAYYRDSKEMFERFKYIDEKATEKLQMLPDKKFHLLLKTGLYALYLSDKKVMSHPRLKAEAKQLIKLGGFPASLFYYNRWIFKRKIS</sequence>
<proteinExistence type="evidence at protein level"/>
<organism>
    <name type="scientific">Shouchella clausii</name>
    <name type="common">Alkalihalobacillus clausii</name>
    <dbReference type="NCBI Taxonomy" id="79880"/>
    <lineage>
        <taxon>Bacteria</taxon>
        <taxon>Bacillati</taxon>
        <taxon>Bacillota</taxon>
        <taxon>Bacilli</taxon>
        <taxon>Bacillales</taxon>
        <taxon>Bacillaceae</taxon>
        <taxon>Shouchella</taxon>
    </lineage>
</organism>
<keyword id="KW-0456">Lyase</keyword>
<comment type="function">
    <text evidence="1 2">Catalyzes the conversion of geranylfarnesyl diphosphate (GFPP) and hexaprenyl diphosphate (HexPP) into beta-geranylfarnesene and beta-hexaprene, respectively (PubMed:23554321, PubMed:25882275). Also produces beta-heptaprene from heptaprenyl diphosphate (HepPP) as a minor product (PubMed:25882275).</text>
</comment>
<comment type="catalytic activity">
    <reaction evidence="1 2">
        <text>(2E,6E,10E,14E)-geranylfarnesyl diphosphate = beta-geranylfarnesene + diphosphate</text>
        <dbReference type="Rhea" id="RHEA:54500"/>
        <dbReference type="ChEBI" id="CHEBI:33019"/>
        <dbReference type="ChEBI" id="CHEBI:57907"/>
        <dbReference type="ChEBI" id="CHEBI:138226"/>
        <dbReference type="EC" id="4.2.3.188"/>
    </reaction>
</comment>
<comment type="catalytic activity">
    <reaction evidence="1 2">
        <text>all-trans-hexaprenyl diphosphate = beta-hexaprene + diphosphate</text>
        <dbReference type="Rhea" id="RHEA:54504"/>
        <dbReference type="ChEBI" id="CHEBI:33019"/>
        <dbReference type="ChEBI" id="CHEBI:58179"/>
        <dbReference type="ChEBI" id="CHEBI:138227"/>
        <dbReference type="EC" id="4.2.3.188"/>
    </reaction>
</comment>
<comment type="catalytic activity">
    <reaction evidence="2">
        <text>all-trans-heptaprenyl diphosphate = beta-heptaprene + diphosphate</text>
        <dbReference type="Rhea" id="RHEA:54508"/>
        <dbReference type="ChEBI" id="CHEBI:33019"/>
        <dbReference type="ChEBI" id="CHEBI:58206"/>
        <dbReference type="ChEBI" id="CHEBI:138228"/>
        <dbReference type="EC" id="4.2.3.188"/>
    </reaction>
</comment>
<comment type="similarity">
    <text evidence="5">Belongs to the large terpene synthase family.</text>
</comment>
<reference key="1">
    <citation type="journal article" date="2013" name="ChemBioChem">
        <title>Identification of novel sesterterpene/triterpene synthase from Bacillus clausii.</title>
        <authorList>
            <person name="Sato T."/>
            <person name="Yamaga H."/>
            <person name="Kashima S."/>
            <person name="Murata Y."/>
            <person name="Shinada T."/>
            <person name="Nakano C."/>
            <person name="Hoshino T."/>
        </authorList>
    </citation>
    <scope>NUCLEOTIDE SEQUENCE [GENOMIC DNA]</scope>
    <scope>FUNCTION</scope>
    <scope>CATALYTIC ACTIVITY</scope>
    <source>
        <strain>JCM 9138</strain>
    </source>
</reference>
<reference key="2">
    <citation type="journal article" date="2015" name="ChemBioChem">
        <title>Biosynthesis of sesterterpenes, head-to-tail triterpenes, and sesquarterpenes in Bacillus clausii: identification of multifunctional enzymes and analysis of isoprenoid metabolites.</title>
        <authorList>
            <person name="Ueda D."/>
            <person name="Yamaga H."/>
            <person name="Murakami M."/>
            <person name="Totsuka Y."/>
            <person name="Shinada T."/>
            <person name="Sato T."/>
        </authorList>
    </citation>
    <scope>FUNCTION</scope>
    <scope>CATALYTIC ACTIVITY</scope>
    <source>
        <strain>JCM 9138</strain>
    </source>
</reference>
<feature type="chain" id="PRO_0000449800" description="Trifunctional sesterterpene/triterpene/sesquarterpene synthase">
    <location>
        <begin position="1"/>
        <end position="352"/>
    </location>
</feature>
<name>BCLTS_SHOCL</name>
<dbReference type="EC" id="4.2.3.188" evidence="1 2"/>
<dbReference type="EMBL" id="AB735674">
    <property type="protein sequence ID" value="BAN05296.1"/>
    <property type="molecule type" value="Genomic_DNA"/>
</dbReference>
<dbReference type="SMR" id="M5AW86"/>
<dbReference type="GO" id="GO:0016829">
    <property type="term" value="F:lyase activity"/>
    <property type="evidence" value="ECO:0007669"/>
    <property type="project" value="UniProtKB-KW"/>
</dbReference>
<dbReference type="InterPro" id="IPR019712">
    <property type="entry name" value="YtpB-like"/>
</dbReference>
<dbReference type="Pfam" id="PF10776">
    <property type="entry name" value="DUF2600"/>
    <property type="match status" value="1"/>
</dbReference>
<protein>
    <recommendedName>
        <fullName evidence="4">Trifunctional sesterterpene/triterpene/sesquarterpene synthase</fullName>
        <ecNumber evidence="1 2">4.2.3.188</ecNumber>
    </recommendedName>
    <alternativeName>
        <fullName evidence="3">Bcl-TS</fullName>
    </alternativeName>
    <alternativeName>
        <fullName evidence="5">Beta-geranylfarnesene synthase</fullName>
    </alternativeName>
</protein>
<evidence type="ECO:0000269" key="1">
    <source>
    </source>
</evidence>
<evidence type="ECO:0000269" key="2">
    <source>
    </source>
</evidence>
<evidence type="ECO:0000303" key="3">
    <source>
    </source>
</evidence>
<evidence type="ECO:0000303" key="4">
    <source>
    </source>
</evidence>
<evidence type="ECO:0000305" key="5"/>
<accession>M5AW86</accession>